<dbReference type="SMR" id="P60309"/>
<dbReference type="GO" id="GO:0005576">
    <property type="term" value="C:extracellular region"/>
    <property type="evidence" value="ECO:0007669"/>
    <property type="project" value="UniProtKB-SubCell"/>
</dbReference>
<dbReference type="GO" id="GO:0016020">
    <property type="term" value="C:membrane"/>
    <property type="evidence" value="ECO:0007669"/>
    <property type="project" value="UniProtKB-KW"/>
</dbReference>
<dbReference type="GO" id="GO:0044218">
    <property type="term" value="C:other organism cell membrane"/>
    <property type="evidence" value="ECO:0007669"/>
    <property type="project" value="UniProtKB-KW"/>
</dbReference>
<dbReference type="GO" id="GO:0090729">
    <property type="term" value="F:toxin activity"/>
    <property type="evidence" value="ECO:0007669"/>
    <property type="project" value="UniProtKB-KW"/>
</dbReference>
<dbReference type="GO" id="GO:0031640">
    <property type="term" value="P:killing of cells of another organism"/>
    <property type="evidence" value="ECO:0007669"/>
    <property type="project" value="UniProtKB-KW"/>
</dbReference>
<dbReference type="CDD" id="cd00206">
    <property type="entry name" value="TFP_snake_toxin"/>
    <property type="match status" value="1"/>
</dbReference>
<dbReference type="FunFam" id="2.10.60.10:FF:000024">
    <property type="entry name" value="Cytotoxin 1"/>
    <property type="match status" value="1"/>
</dbReference>
<dbReference type="Gene3D" id="2.10.60.10">
    <property type="entry name" value="CD59"/>
    <property type="match status" value="1"/>
</dbReference>
<dbReference type="InterPro" id="IPR003572">
    <property type="entry name" value="Cytotoxin_Cobra"/>
</dbReference>
<dbReference type="InterPro" id="IPR003571">
    <property type="entry name" value="Snake_3FTx"/>
</dbReference>
<dbReference type="InterPro" id="IPR045860">
    <property type="entry name" value="Snake_toxin-like_sf"/>
</dbReference>
<dbReference type="InterPro" id="IPR018354">
    <property type="entry name" value="Snake_toxin_con_site"/>
</dbReference>
<dbReference type="InterPro" id="IPR054131">
    <property type="entry name" value="Toxin_cobra-type"/>
</dbReference>
<dbReference type="Pfam" id="PF21947">
    <property type="entry name" value="Toxin_cobra-type"/>
    <property type="match status" value="1"/>
</dbReference>
<dbReference type="PRINTS" id="PR00282">
    <property type="entry name" value="CYTOTOXIN"/>
</dbReference>
<dbReference type="SUPFAM" id="SSF57302">
    <property type="entry name" value="Snake toxin-like"/>
    <property type="match status" value="1"/>
</dbReference>
<dbReference type="PROSITE" id="PS00272">
    <property type="entry name" value="SNAKE_TOXIN"/>
    <property type="match status" value="1"/>
</dbReference>
<protein>
    <recommendedName>
        <fullName>Cytotoxin SP15d</fullName>
    </recommendedName>
</protein>
<accession>P60309</accession>
<proteinExistence type="evidence at protein level"/>
<organism>
    <name type="scientific">Naja atra</name>
    <name type="common">Chinese cobra</name>
    <dbReference type="NCBI Taxonomy" id="8656"/>
    <lineage>
        <taxon>Eukaryota</taxon>
        <taxon>Metazoa</taxon>
        <taxon>Chordata</taxon>
        <taxon>Craniata</taxon>
        <taxon>Vertebrata</taxon>
        <taxon>Euteleostomi</taxon>
        <taxon>Lepidosauria</taxon>
        <taxon>Squamata</taxon>
        <taxon>Bifurcata</taxon>
        <taxon>Unidentata</taxon>
        <taxon>Episquamata</taxon>
        <taxon>Toxicofera</taxon>
        <taxon>Serpentes</taxon>
        <taxon>Colubroidea</taxon>
        <taxon>Elapidae</taxon>
        <taxon>Elapinae</taxon>
        <taxon>Naja</taxon>
    </lineage>
</organism>
<comment type="function">
    <text evidence="1 2">Shows cytolytic activity on many different cells by forming pore in lipid membranes. In vivo, increases heart rate or kills the animal by cardiac arrest. In addition, it binds to heparin with high affinity, interacts with Kv channel-interacting protein 1 (KCNIP1) in a calcium-independent manner, and binds to integrin alpha-V/beta-3 (ITGAV/ITGB3) with moderate affinity.</text>
</comment>
<comment type="subunit">
    <text evidence="1">Monomer in solution; Homodimer and oligomer in the presence of negatively charged lipids forming a pore with a size ranging between 20 and 30 Angstroms.</text>
</comment>
<comment type="subcellular location">
    <subcellularLocation>
        <location evidence="3">Secreted</location>
    </subcellularLocation>
    <subcellularLocation>
        <location evidence="1">Target cell membrane</location>
    </subcellularLocation>
</comment>
<comment type="tissue specificity">
    <text evidence="4">Expressed by the venom gland.</text>
</comment>
<comment type="miscellaneous">
    <text evidence="4">Is classified as a P-type cytotoxin, since a proline residue stands at position 30 (Pro-31 in standard classification).</text>
</comment>
<comment type="similarity">
    <text evidence="4">Belongs to the three-finger toxin family. Short-chain subfamily. Type IA cytotoxin sub-subfamily.</text>
</comment>
<feature type="chain" id="PRO_0000093484" description="Cytotoxin SP15d" evidence="3">
    <location>
        <begin position="1"/>
        <end position="60"/>
    </location>
</feature>
<feature type="disulfide bond" evidence="1">
    <location>
        <begin position="3"/>
        <end position="21"/>
    </location>
</feature>
<feature type="disulfide bond" evidence="1">
    <location>
        <begin position="14"/>
        <end position="38"/>
    </location>
</feature>
<feature type="disulfide bond" evidence="1">
    <location>
        <begin position="42"/>
        <end position="53"/>
    </location>
</feature>
<feature type="disulfide bond" evidence="1">
    <location>
        <begin position="54"/>
        <end position="59"/>
    </location>
</feature>
<reference key="1">
    <citation type="journal article" date="2000" name="Toxicon">
        <title>The multiplicity of cardiotoxins from Naja naja atra (Taiwan cobra) venom.</title>
        <authorList>
            <person name="Chang L.-S."/>
            <person name="Huang H.-B."/>
            <person name="Lin S.-R."/>
        </authorList>
    </citation>
    <scope>PROTEIN SEQUENCE</scope>
    <scope>SUBCELLULAR LOCATION</scope>
    <source>
        <tissue>Venom</tissue>
    </source>
</reference>
<keyword id="KW-0123">Cardiotoxin</keyword>
<keyword id="KW-0204">Cytolysis</keyword>
<keyword id="KW-0903">Direct protein sequencing</keyword>
<keyword id="KW-1015">Disulfide bond</keyword>
<keyword id="KW-0472">Membrane</keyword>
<keyword id="KW-0964">Secreted</keyword>
<keyword id="KW-1052">Target cell membrane</keyword>
<keyword id="KW-1053">Target membrane</keyword>
<keyword id="KW-0800">Toxin</keyword>
<name>3SAFD_NAJAT</name>
<sequence length="60" mass="6652">LKCKKLVPLFSKTCPPGKNLCYKMFMVAAPKVPVKRGCINVCPKSSLLVKYVCCNTDKCN</sequence>
<evidence type="ECO:0000250" key="1">
    <source>
        <dbReference type="UniProtKB" id="P60301"/>
    </source>
</evidence>
<evidence type="ECO:0000250" key="2">
    <source>
        <dbReference type="UniProtKB" id="P60304"/>
    </source>
</evidence>
<evidence type="ECO:0000269" key="3">
    <source>
    </source>
</evidence>
<evidence type="ECO:0000305" key="4"/>